<keyword id="KW-0687">Ribonucleoprotein</keyword>
<keyword id="KW-0689">Ribosomal protein</keyword>
<organism>
    <name type="scientific">Escherichia coli (strain UTI89 / UPEC)</name>
    <dbReference type="NCBI Taxonomy" id="364106"/>
    <lineage>
        <taxon>Bacteria</taxon>
        <taxon>Pseudomonadati</taxon>
        <taxon>Pseudomonadota</taxon>
        <taxon>Gammaproteobacteria</taxon>
        <taxon>Enterobacterales</taxon>
        <taxon>Enterobacteriaceae</taxon>
        <taxon>Escherichia</taxon>
    </lineage>
</organism>
<gene>
    <name evidence="1" type="primary">rpsI</name>
    <name type="ordered locus">UTI89_C3660</name>
</gene>
<proteinExistence type="inferred from homology"/>
<reference key="1">
    <citation type="journal article" date="2006" name="Proc. Natl. Acad. Sci. U.S.A.">
        <title>Identification of genes subject to positive selection in uropathogenic strains of Escherichia coli: a comparative genomics approach.</title>
        <authorList>
            <person name="Chen S.L."/>
            <person name="Hung C.-S."/>
            <person name="Xu J."/>
            <person name="Reigstad C.S."/>
            <person name="Magrini V."/>
            <person name="Sabo A."/>
            <person name="Blasiar D."/>
            <person name="Bieri T."/>
            <person name="Meyer R.R."/>
            <person name="Ozersky P."/>
            <person name="Armstrong J.R."/>
            <person name="Fulton R.S."/>
            <person name="Latreille J.P."/>
            <person name="Spieth J."/>
            <person name="Hooton T.M."/>
            <person name="Mardis E.R."/>
            <person name="Hultgren S.J."/>
            <person name="Gordon J.I."/>
        </authorList>
    </citation>
    <scope>NUCLEOTIDE SEQUENCE [LARGE SCALE GENOMIC DNA]</scope>
    <source>
        <strain>UTI89 / UPEC</strain>
    </source>
</reference>
<comment type="similarity">
    <text evidence="1">Belongs to the universal ribosomal protein uS9 family.</text>
</comment>
<name>RS9_ECOUT</name>
<feature type="chain" id="PRO_1000051221" description="Small ribosomal subunit protein uS9">
    <location>
        <begin position="1"/>
        <end position="130"/>
    </location>
</feature>
<sequence length="130" mass="14856">MAENQYYGTGRRKSSAARVFIKPGNGKIVINQRSLEQYFGRETARMVVRQPLELVDMVEKLDLYITVKGGGISGQAGAIRHGITRALMEYDESLRSELRKAGFVTRDARQVERKKVGLRKARRRPQFSKR</sequence>
<evidence type="ECO:0000255" key="1">
    <source>
        <dbReference type="HAMAP-Rule" id="MF_00532"/>
    </source>
</evidence>
<evidence type="ECO:0000305" key="2"/>
<dbReference type="EMBL" id="CP000243">
    <property type="protein sequence ID" value="ABE09104.1"/>
    <property type="molecule type" value="Genomic_DNA"/>
</dbReference>
<dbReference type="RefSeq" id="WP_000829818.1">
    <property type="nucleotide sequence ID" value="NZ_CP064825.1"/>
</dbReference>
<dbReference type="SMR" id="Q1R6B0"/>
<dbReference type="GeneID" id="98390344"/>
<dbReference type="KEGG" id="eci:UTI89_C3660"/>
<dbReference type="HOGENOM" id="CLU_046483_2_1_6"/>
<dbReference type="Proteomes" id="UP000001952">
    <property type="component" value="Chromosome"/>
</dbReference>
<dbReference type="GO" id="GO:0022627">
    <property type="term" value="C:cytosolic small ribosomal subunit"/>
    <property type="evidence" value="ECO:0007669"/>
    <property type="project" value="TreeGrafter"/>
</dbReference>
<dbReference type="GO" id="GO:0003723">
    <property type="term" value="F:RNA binding"/>
    <property type="evidence" value="ECO:0007669"/>
    <property type="project" value="TreeGrafter"/>
</dbReference>
<dbReference type="GO" id="GO:0003735">
    <property type="term" value="F:structural constituent of ribosome"/>
    <property type="evidence" value="ECO:0007669"/>
    <property type="project" value="InterPro"/>
</dbReference>
<dbReference type="GO" id="GO:0006412">
    <property type="term" value="P:translation"/>
    <property type="evidence" value="ECO:0007669"/>
    <property type="project" value="UniProtKB-UniRule"/>
</dbReference>
<dbReference type="FunFam" id="3.30.230.10:FF:000001">
    <property type="entry name" value="30S ribosomal protein S9"/>
    <property type="match status" value="1"/>
</dbReference>
<dbReference type="Gene3D" id="3.30.230.10">
    <property type="match status" value="1"/>
</dbReference>
<dbReference type="HAMAP" id="MF_00532_B">
    <property type="entry name" value="Ribosomal_uS9_B"/>
    <property type="match status" value="1"/>
</dbReference>
<dbReference type="InterPro" id="IPR020568">
    <property type="entry name" value="Ribosomal_Su5_D2-typ_SF"/>
</dbReference>
<dbReference type="InterPro" id="IPR000754">
    <property type="entry name" value="Ribosomal_uS9"/>
</dbReference>
<dbReference type="InterPro" id="IPR023035">
    <property type="entry name" value="Ribosomal_uS9_bac/plastid"/>
</dbReference>
<dbReference type="InterPro" id="IPR020574">
    <property type="entry name" value="Ribosomal_uS9_CS"/>
</dbReference>
<dbReference type="InterPro" id="IPR014721">
    <property type="entry name" value="Ribsml_uS5_D2-typ_fold_subgr"/>
</dbReference>
<dbReference type="NCBIfam" id="NF001099">
    <property type="entry name" value="PRK00132.1"/>
    <property type="match status" value="1"/>
</dbReference>
<dbReference type="PANTHER" id="PTHR21569">
    <property type="entry name" value="RIBOSOMAL PROTEIN S9"/>
    <property type="match status" value="1"/>
</dbReference>
<dbReference type="PANTHER" id="PTHR21569:SF1">
    <property type="entry name" value="SMALL RIBOSOMAL SUBUNIT PROTEIN US9M"/>
    <property type="match status" value="1"/>
</dbReference>
<dbReference type="Pfam" id="PF00380">
    <property type="entry name" value="Ribosomal_S9"/>
    <property type="match status" value="1"/>
</dbReference>
<dbReference type="SUPFAM" id="SSF54211">
    <property type="entry name" value="Ribosomal protein S5 domain 2-like"/>
    <property type="match status" value="1"/>
</dbReference>
<dbReference type="PROSITE" id="PS00360">
    <property type="entry name" value="RIBOSOMAL_S9"/>
    <property type="match status" value="1"/>
</dbReference>
<accession>Q1R6B0</accession>
<protein>
    <recommendedName>
        <fullName evidence="1">Small ribosomal subunit protein uS9</fullName>
    </recommendedName>
    <alternativeName>
        <fullName evidence="2">30S ribosomal protein S9</fullName>
    </alternativeName>
</protein>